<evidence type="ECO:0000250" key="1"/>
<evidence type="ECO:0000250" key="2">
    <source>
        <dbReference type="UniProtKB" id="P00157"/>
    </source>
</evidence>
<evidence type="ECO:0000255" key="3">
    <source>
        <dbReference type="PROSITE-ProRule" id="PRU00967"/>
    </source>
</evidence>
<evidence type="ECO:0000255" key="4">
    <source>
        <dbReference type="PROSITE-ProRule" id="PRU00968"/>
    </source>
</evidence>
<organism>
    <name type="scientific">Hippotragus niger</name>
    <name type="common">Sable antelope</name>
    <dbReference type="NCBI Taxonomy" id="37189"/>
    <lineage>
        <taxon>Eukaryota</taxon>
        <taxon>Metazoa</taxon>
        <taxon>Chordata</taxon>
        <taxon>Craniata</taxon>
        <taxon>Vertebrata</taxon>
        <taxon>Euteleostomi</taxon>
        <taxon>Mammalia</taxon>
        <taxon>Eutheria</taxon>
        <taxon>Laurasiatheria</taxon>
        <taxon>Artiodactyla</taxon>
        <taxon>Ruminantia</taxon>
        <taxon>Pecora</taxon>
        <taxon>Bovidae</taxon>
        <taxon>Hippotraginae</taxon>
        <taxon>Hippotragus</taxon>
    </lineage>
</organism>
<accession>Q34760</accession>
<accession>Q34759</accession>
<feature type="chain" id="PRO_0000061042" description="Cytochrome b">
    <location>
        <begin position="1"/>
        <end position="379"/>
    </location>
</feature>
<feature type="transmembrane region" description="Helical" evidence="2">
    <location>
        <begin position="33"/>
        <end position="53"/>
    </location>
</feature>
<feature type="transmembrane region" description="Helical" evidence="2">
    <location>
        <begin position="77"/>
        <end position="98"/>
    </location>
</feature>
<feature type="transmembrane region" description="Helical" evidence="2">
    <location>
        <begin position="113"/>
        <end position="133"/>
    </location>
</feature>
<feature type="transmembrane region" description="Helical" evidence="2">
    <location>
        <begin position="178"/>
        <end position="198"/>
    </location>
</feature>
<feature type="transmembrane region" description="Helical" evidence="2">
    <location>
        <begin position="226"/>
        <end position="246"/>
    </location>
</feature>
<feature type="transmembrane region" description="Helical" evidence="2">
    <location>
        <begin position="288"/>
        <end position="308"/>
    </location>
</feature>
<feature type="transmembrane region" description="Helical" evidence="2">
    <location>
        <begin position="320"/>
        <end position="340"/>
    </location>
</feature>
<feature type="transmembrane region" description="Helical" evidence="2">
    <location>
        <begin position="347"/>
        <end position="367"/>
    </location>
</feature>
<feature type="binding site" description="axial binding residue" evidence="2">
    <location>
        <position position="83"/>
    </location>
    <ligand>
        <name>heme b</name>
        <dbReference type="ChEBI" id="CHEBI:60344"/>
        <label>b562</label>
    </ligand>
    <ligandPart>
        <name>Fe</name>
        <dbReference type="ChEBI" id="CHEBI:18248"/>
    </ligandPart>
</feature>
<feature type="binding site" description="axial binding residue" evidence="2">
    <location>
        <position position="97"/>
    </location>
    <ligand>
        <name>heme b</name>
        <dbReference type="ChEBI" id="CHEBI:60344"/>
        <label>b566</label>
    </ligand>
    <ligandPart>
        <name>Fe</name>
        <dbReference type="ChEBI" id="CHEBI:18248"/>
    </ligandPart>
</feature>
<feature type="binding site" description="axial binding residue" evidence="2">
    <location>
        <position position="182"/>
    </location>
    <ligand>
        <name>heme b</name>
        <dbReference type="ChEBI" id="CHEBI:60344"/>
        <label>b562</label>
    </ligand>
    <ligandPart>
        <name>Fe</name>
        <dbReference type="ChEBI" id="CHEBI:18248"/>
    </ligandPart>
</feature>
<feature type="binding site" description="axial binding residue" evidence="2">
    <location>
        <position position="196"/>
    </location>
    <ligand>
        <name>heme b</name>
        <dbReference type="ChEBI" id="CHEBI:60344"/>
        <label>b566</label>
    </ligand>
    <ligandPart>
        <name>Fe</name>
        <dbReference type="ChEBI" id="CHEBI:18248"/>
    </ligandPart>
</feature>
<feature type="binding site" evidence="2">
    <location>
        <position position="201"/>
    </location>
    <ligand>
        <name>a ubiquinone</name>
        <dbReference type="ChEBI" id="CHEBI:16389"/>
    </ligand>
</feature>
<keyword id="KW-0249">Electron transport</keyword>
<keyword id="KW-0349">Heme</keyword>
<keyword id="KW-0408">Iron</keyword>
<keyword id="KW-0472">Membrane</keyword>
<keyword id="KW-0479">Metal-binding</keyword>
<keyword id="KW-0496">Mitochondrion</keyword>
<keyword id="KW-0999">Mitochondrion inner membrane</keyword>
<keyword id="KW-0679">Respiratory chain</keyword>
<keyword id="KW-0812">Transmembrane</keyword>
<keyword id="KW-1133">Transmembrane helix</keyword>
<keyword id="KW-0813">Transport</keyword>
<keyword id="KW-0830">Ubiquinone</keyword>
<proteinExistence type="inferred from homology"/>
<geneLocation type="mitochondrion"/>
<name>CYB_HIPNI</name>
<protein>
    <recommendedName>
        <fullName>Cytochrome b</fullName>
    </recommendedName>
    <alternativeName>
        <fullName>Complex III subunit 3</fullName>
    </alternativeName>
    <alternativeName>
        <fullName>Complex III subunit III</fullName>
    </alternativeName>
    <alternativeName>
        <fullName>Cytochrome b-c1 complex subunit 3</fullName>
    </alternativeName>
    <alternativeName>
        <fullName>Ubiquinol-cytochrome-c reductase complex cytochrome b subunit</fullName>
    </alternativeName>
</protein>
<comment type="function">
    <text evidence="2">Component of the ubiquinol-cytochrome c reductase complex (complex III or cytochrome b-c1 complex) that is part of the mitochondrial respiratory chain. The b-c1 complex mediates electron transfer from ubiquinol to cytochrome c. Contributes to the generation of a proton gradient across the mitochondrial membrane that is then used for ATP synthesis.</text>
</comment>
<comment type="cofactor">
    <cofactor evidence="2">
        <name>heme b</name>
        <dbReference type="ChEBI" id="CHEBI:60344"/>
    </cofactor>
    <text evidence="2">Binds 2 heme b groups non-covalently.</text>
</comment>
<comment type="subunit">
    <text evidence="2">The cytochrome bc1 complex contains 11 subunits: 3 respiratory subunits (MT-CYB, CYC1 and UQCRFS1), 2 core proteins (UQCRC1 and UQCRC2) and 6 low-molecular weight proteins (UQCRH/QCR6, UQCRB/QCR7, UQCRQ/QCR8, UQCR10/QCR9, UQCR11/QCR10 and a cleavage product of UQCRFS1). This cytochrome bc1 complex then forms a dimer.</text>
</comment>
<comment type="subcellular location">
    <subcellularLocation>
        <location evidence="2">Mitochondrion inner membrane</location>
        <topology evidence="2">Multi-pass membrane protein</topology>
    </subcellularLocation>
</comment>
<comment type="miscellaneous">
    <text evidence="1">Heme 1 (or BL or b562) is low-potential and absorbs at about 562 nm, and heme 2 (or BH or b566) is high-potential and absorbs at about 566 nm.</text>
</comment>
<comment type="similarity">
    <text evidence="3 4">Belongs to the cytochrome b family.</text>
</comment>
<comment type="caution">
    <text evidence="2">The full-length protein contains only eight transmembrane helices, not nine as predicted by bioinformatics tools.</text>
</comment>
<dbReference type="EMBL" id="AF022061">
    <property type="protein sequence ID" value="AAD13495.1"/>
    <property type="molecule type" value="Genomic_DNA"/>
</dbReference>
<dbReference type="EMBL" id="U18286">
    <property type="protein sequence ID" value="AAC48606.1"/>
    <property type="molecule type" value="Genomic_DNA"/>
</dbReference>
<dbReference type="EMBL" id="U18287">
    <property type="protein sequence ID" value="AAC48607.1"/>
    <property type="molecule type" value="Genomic_DNA"/>
</dbReference>
<dbReference type="SMR" id="Q34760"/>
<dbReference type="GO" id="GO:0005743">
    <property type="term" value="C:mitochondrial inner membrane"/>
    <property type="evidence" value="ECO:0007669"/>
    <property type="project" value="UniProtKB-SubCell"/>
</dbReference>
<dbReference type="GO" id="GO:0045275">
    <property type="term" value="C:respiratory chain complex III"/>
    <property type="evidence" value="ECO:0007669"/>
    <property type="project" value="InterPro"/>
</dbReference>
<dbReference type="GO" id="GO:0046872">
    <property type="term" value="F:metal ion binding"/>
    <property type="evidence" value="ECO:0007669"/>
    <property type="project" value="UniProtKB-KW"/>
</dbReference>
<dbReference type="GO" id="GO:0008121">
    <property type="term" value="F:ubiquinol-cytochrome-c reductase activity"/>
    <property type="evidence" value="ECO:0007669"/>
    <property type="project" value="InterPro"/>
</dbReference>
<dbReference type="GO" id="GO:0006122">
    <property type="term" value="P:mitochondrial electron transport, ubiquinol to cytochrome c"/>
    <property type="evidence" value="ECO:0007669"/>
    <property type="project" value="TreeGrafter"/>
</dbReference>
<dbReference type="CDD" id="cd00290">
    <property type="entry name" value="cytochrome_b_C"/>
    <property type="match status" value="1"/>
</dbReference>
<dbReference type="CDD" id="cd00284">
    <property type="entry name" value="Cytochrome_b_N"/>
    <property type="match status" value="1"/>
</dbReference>
<dbReference type="FunFam" id="1.20.810.10:FF:000002">
    <property type="entry name" value="Cytochrome b"/>
    <property type="match status" value="1"/>
</dbReference>
<dbReference type="Gene3D" id="1.20.810.10">
    <property type="entry name" value="Cytochrome Bc1 Complex, Chain C"/>
    <property type="match status" value="1"/>
</dbReference>
<dbReference type="InterPro" id="IPR005798">
    <property type="entry name" value="Cyt_b/b6_C"/>
</dbReference>
<dbReference type="InterPro" id="IPR036150">
    <property type="entry name" value="Cyt_b/b6_C_sf"/>
</dbReference>
<dbReference type="InterPro" id="IPR005797">
    <property type="entry name" value="Cyt_b/b6_N"/>
</dbReference>
<dbReference type="InterPro" id="IPR027387">
    <property type="entry name" value="Cytb/b6-like_sf"/>
</dbReference>
<dbReference type="InterPro" id="IPR030689">
    <property type="entry name" value="Cytochrome_b"/>
</dbReference>
<dbReference type="InterPro" id="IPR048260">
    <property type="entry name" value="Cytochrome_b_C_euk/bac"/>
</dbReference>
<dbReference type="InterPro" id="IPR048259">
    <property type="entry name" value="Cytochrome_b_N_euk/bac"/>
</dbReference>
<dbReference type="InterPro" id="IPR016174">
    <property type="entry name" value="Di-haem_cyt_TM"/>
</dbReference>
<dbReference type="PANTHER" id="PTHR19271">
    <property type="entry name" value="CYTOCHROME B"/>
    <property type="match status" value="1"/>
</dbReference>
<dbReference type="PANTHER" id="PTHR19271:SF16">
    <property type="entry name" value="CYTOCHROME B"/>
    <property type="match status" value="1"/>
</dbReference>
<dbReference type="Pfam" id="PF00032">
    <property type="entry name" value="Cytochrom_B_C"/>
    <property type="match status" value="1"/>
</dbReference>
<dbReference type="Pfam" id="PF00033">
    <property type="entry name" value="Cytochrome_B"/>
    <property type="match status" value="1"/>
</dbReference>
<dbReference type="PIRSF" id="PIRSF038885">
    <property type="entry name" value="COB"/>
    <property type="match status" value="1"/>
</dbReference>
<dbReference type="SUPFAM" id="SSF81648">
    <property type="entry name" value="a domain/subunit of cytochrome bc1 complex (Ubiquinol-cytochrome c reductase)"/>
    <property type="match status" value="1"/>
</dbReference>
<dbReference type="SUPFAM" id="SSF81342">
    <property type="entry name" value="Transmembrane di-heme cytochromes"/>
    <property type="match status" value="1"/>
</dbReference>
<dbReference type="PROSITE" id="PS51003">
    <property type="entry name" value="CYTB_CTER"/>
    <property type="match status" value="1"/>
</dbReference>
<dbReference type="PROSITE" id="PS51002">
    <property type="entry name" value="CYTB_NTER"/>
    <property type="match status" value="1"/>
</dbReference>
<sequence length="379" mass="42652">MINIRKTHPLMKIVNNAFIDLPTPPNISSWWNFGSLLGICLILQILTGLFLAMHYTSDTMTAFSSVTHICRDVNYGWIIRYMHANGASMFFICLFMHVGRGLYYGSYTFLKTWNIGVILLFATMATAFMGYVLPWGQMSSWGATVITNILSAIPYIGTNLVEWIWGGFSVDKATLTRFFAFHFILPFIISALAMVHLLFLHETGSNNPTGISSDADKIPFHPYYTIKDILGALLLILALMLLVLFAPDLLGDPDNYTPANPLNTPPHIKPEWYFLFAYAILRSIPNKLGGVLALIFSILILVLMPALHTSKQRSMMFRPISQCIFWILVADLLTLTWIGGQPVEHPYIIIGQLASIMYFLLILVLMPMAGSIENNSLKW</sequence>
<gene>
    <name type="primary">MT-CYB</name>
    <name type="synonym">COB</name>
    <name type="synonym">CYTB</name>
    <name type="synonym">MTCYB</name>
</gene>
<reference key="1">
    <citation type="journal article" date="1999" name="Mol. Phylogenet. Evol.">
        <title>Cytochrome b phylogeny of the family bovidae: resolution within the alcelaphini, antilopini, neotragini, and tragelaphini.</title>
        <authorList>
            <person name="Matthee C.A."/>
            <person name="Robinson T.J."/>
        </authorList>
    </citation>
    <scope>NUCLEOTIDE SEQUENCE [GENOMIC DNA]</scope>
    <source>
        <strain>Malawi</strain>
        <strain>Sable</strain>
    </source>
</reference>
<reference key="2">
    <citation type="journal article" date="1996" name="Naturwissenschaften">
        <title>Mitochondrial DNA sequence relationships of the extinct blue antelope Hippotragus leucophaeus.</title>
        <authorList>
            <person name="Robinson T.J."/>
            <person name="Bastos A.D."/>
            <person name="Halanych K.M."/>
            <person name="Herzig B."/>
        </authorList>
    </citation>
    <scope>NUCLEOTIDE SEQUENCE [GENOMIC DNA] OF 40-123</scope>
    <source>
        <strain>Malawi</strain>
    </source>
</reference>